<reference key="1">
    <citation type="journal article" date="2006" name="BMC Evol. Biol.">
        <title>Complete plastid genome sequences of Drimys, Liriodendron, and Piper: implications for the phylogenetic relationships of magnoliids.</title>
        <authorList>
            <person name="Cai Z."/>
            <person name="Penaflor C."/>
            <person name="Kuehl J.V."/>
            <person name="Leebens-Mack J."/>
            <person name="Carlson J.E."/>
            <person name="dePamphilis C.W."/>
            <person name="Boore J.L."/>
            <person name="Jansen R.K."/>
        </authorList>
    </citation>
    <scope>NUCLEOTIDE SEQUENCE [LARGE SCALE GENOMIC DNA]</scope>
</reference>
<feature type="chain" id="PRO_0000276721" description="Small ribosomal subunit protein uS8c">
    <location>
        <begin position="1"/>
        <end position="132"/>
    </location>
</feature>
<protein>
    <recommendedName>
        <fullName evidence="2">Small ribosomal subunit protein uS8c</fullName>
    </recommendedName>
    <alternativeName>
        <fullName>30S ribosomal protein S8, chloroplastic</fullName>
    </alternativeName>
</protein>
<name>RR8_DRIGR</name>
<accession>Q06GW1</accession>
<gene>
    <name type="primary">rps8</name>
</gene>
<organism>
    <name type="scientific">Drimys granadensis</name>
    <dbReference type="NCBI Taxonomy" id="224735"/>
    <lineage>
        <taxon>Eukaryota</taxon>
        <taxon>Viridiplantae</taxon>
        <taxon>Streptophyta</taxon>
        <taxon>Embryophyta</taxon>
        <taxon>Tracheophyta</taxon>
        <taxon>Spermatophyta</taxon>
        <taxon>Magnoliopsida</taxon>
        <taxon>Magnoliidae</taxon>
        <taxon>Canellales</taxon>
        <taxon>Winteraceae</taxon>
        <taxon>Drimys</taxon>
    </lineage>
</organism>
<evidence type="ECO:0000250" key="1"/>
<evidence type="ECO:0000305" key="2"/>
<comment type="function">
    <text evidence="1">One of the primary rRNA binding proteins, it binds directly to 16S rRNA central domain where it helps coordinate assembly of the platform of the 30S subunit.</text>
</comment>
<comment type="subunit">
    <text evidence="1">Part of the 30S ribosomal subunit.</text>
</comment>
<comment type="subcellular location">
    <subcellularLocation>
        <location>Plastid</location>
        <location>Chloroplast</location>
    </subcellularLocation>
</comment>
<comment type="similarity">
    <text evidence="2">Belongs to the universal ribosomal protein uS8 family.</text>
</comment>
<geneLocation type="chloroplast"/>
<sequence>MSKDTIADIITSIRNADMDKKGTVRIASTNITENIIKILLREGFIENVRKHRENNKYLLILTLRHRRNRKGTYRNILKCISRPGLRIYSNYKRIPRILGGIGIVILSTSRGIMTDREARLKGIGGEILCYIW</sequence>
<keyword id="KW-0150">Chloroplast</keyword>
<keyword id="KW-0934">Plastid</keyword>
<keyword id="KW-0687">Ribonucleoprotein</keyword>
<keyword id="KW-0689">Ribosomal protein</keyword>
<keyword id="KW-0694">RNA-binding</keyword>
<keyword id="KW-0699">rRNA-binding</keyword>
<dbReference type="EMBL" id="DQ887676">
    <property type="protein sequence ID" value="ABH88332.1"/>
    <property type="molecule type" value="Genomic_DNA"/>
</dbReference>
<dbReference type="RefSeq" id="YP_784422.1">
    <property type="nucleotide sequence ID" value="NC_008456.1"/>
</dbReference>
<dbReference type="SMR" id="Q06GW1"/>
<dbReference type="GeneID" id="4363608"/>
<dbReference type="GO" id="GO:0009507">
    <property type="term" value="C:chloroplast"/>
    <property type="evidence" value="ECO:0007669"/>
    <property type="project" value="UniProtKB-SubCell"/>
</dbReference>
<dbReference type="GO" id="GO:1990904">
    <property type="term" value="C:ribonucleoprotein complex"/>
    <property type="evidence" value="ECO:0007669"/>
    <property type="project" value="UniProtKB-KW"/>
</dbReference>
<dbReference type="GO" id="GO:0005840">
    <property type="term" value="C:ribosome"/>
    <property type="evidence" value="ECO:0007669"/>
    <property type="project" value="UniProtKB-KW"/>
</dbReference>
<dbReference type="GO" id="GO:0019843">
    <property type="term" value="F:rRNA binding"/>
    <property type="evidence" value="ECO:0007669"/>
    <property type="project" value="UniProtKB-UniRule"/>
</dbReference>
<dbReference type="GO" id="GO:0003735">
    <property type="term" value="F:structural constituent of ribosome"/>
    <property type="evidence" value="ECO:0007669"/>
    <property type="project" value="InterPro"/>
</dbReference>
<dbReference type="GO" id="GO:0006412">
    <property type="term" value="P:translation"/>
    <property type="evidence" value="ECO:0007669"/>
    <property type="project" value="UniProtKB-UniRule"/>
</dbReference>
<dbReference type="FunFam" id="3.30.1490.10:FF:000001">
    <property type="entry name" value="30S ribosomal protein S8"/>
    <property type="match status" value="1"/>
</dbReference>
<dbReference type="FunFam" id="3.30.1370.30:FF:000004">
    <property type="entry name" value="30S ribosomal protein S8, chloroplastic"/>
    <property type="match status" value="1"/>
</dbReference>
<dbReference type="Gene3D" id="3.30.1370.30">
    <property type="match status" value="1"/>
</dbReference>
<dbReference type="Gene3D" id="3.30.1490.10">
    <property type="match status" value="1"/>
</dbReference>
<dbReference type="HAMAP" id="MF_01302_B">
    <property type="entry name" value="Ribosomal_uS8_B"/>
    <property type="match status" value="1"/>
</dbReference>
<dbReference type="InterPro" id="IPR000630">
    <property type="entry name" value="Ribosomal_uS8"/>
</dbReference>
<dbReference type="InterPro" id="IPR047863">
    <property type="entry name" value="Ribosomal_uS8_CS"/>
</dbReference>
<dbReference type="InterPro" id="IPR035987">
    <property type="entry name" value="Ribosomal_uS8_sf"/>
</dbReference>
<dbReference type="NCBIfam" id="NF001109">
    <property type="entry name" value="PRK00136.1"/>
    <property type="match status" value="1"/>
</dbReference>
<dbReference type="PANTHER" id="PTHR11758">
    <property type="entry name" value="40S RIBOSOMAL PROTEIN S15A"/>
    <property type="match status" value="1"/>
</dbReference>
<dbReference type="Pfam" id="PF00410">
    <property type="entry name" value="Ribosomal_S8"/>
    <property type="match status" value="1"/>
</dbReference>
<dbReference type="SUPFAM" id="SSF56047">
    <property type="entry name" value="Ribosomal protein S8"/>
    <property type="match status" value="1"/>
</dbReference>
<dbReference type="PROSITE" id="PS00053">
    <property type="entry name" value="RIBOSOMAL_S8"/>
    <property type="match status" value="1"/>
</dbReference>
<proteinExistence type="inferred from homology"/>